<name>Y1220_MYCTO</name>
<dbReference type="EC" id="2.1.1.-"/>
<dbReference type="EMBL" id="AE000516">
    <property type="protein sequence ID" value="AAK45515.1"/>
    <property type="status" value="ALT_INIT"/>
    <property type="molecule type" value="Genomic_DNA"/>
</dbReference>
<dbReference type="PIR" id="G70507">
    <property type="entry name" value="G70507"/>
</dbReference>
<dbReference type="RefSeq" id="WP_003911448.1">
    <property type="nucleotide sequence ID" value="NZ_KK341227.1"/>
</dbReference>
<dbReference type="SMR" id="P9WJZ6"/>
<dbReference type="KEGG" id="mtc:MT1258"/>
<dbReference type="HOGENOM" id="CLU_067676_2_0_11"/>
<dbReference type="Proteomes" id="UP000001020">
    <property type="component" value="Chromosome"/>
</dbReference>
<dbReference type="GO" id="GO:0008171">
    <property type="term" value="F:O-methyltransferase activity"/>
    <property type="evidence" value="ECO:0007669"/>
    <property type="project" value="InterPro"/>
</dbReference>
<dbReference type="GO" id="GO:0008757">
    <property type="term" value="F:S-adenosylmethionine-dependent methyltransferase activity"/>
    <property type="evidence" value="ECO:0007669"/>
    <property type="project" value="TreeGrafter"/>
</dbReference>
<dbReference type="GO" id="GO:0032259">
    <property type="term" value="P:methylation"/>
    <property type="evidence" value="ECO:0007669"/>
    <property type="project" value="UniProtKB-KW"/>
</dbReference>
<dbReference type="CDD" id="cd02440">
    <property type="entry name" value="AdoMet_MTases"/>
    <property type="match status" value="1"/>
</dbReference>
<dbReference type="FunFam" id="3.40.50.150:FF:000374">
    <property type="entry name" value="Putative methyltransferase"/>
    <property type="match status" value="1"/>
</dbReference>
<dbReference type="Gene3D" id="3.40.50.150">
    <property type="entry name" value="Vaccinia Virus protein VP39"/>
    <property type="match status" value="1"/>
</dbReference>
<dbReference type="InterPro" id="IPR050362">
    <property type="entry name" value="Cation-dep_OMT"/>
</dbReference>
<dbReference type="InterPro" id="IPR029063">
    <property type="entry name" value="SAM-dependent_MTases_sf"/>
</dbReference>
<dbReference type="InterPro" id="IPR002935">
    <property type="entry name" value="SAM_O-MeTrfase"/>
</dbReference>
<dbReference type="PANTHER" id="PTHR10509:SF85">
    <property type="entry name" value="O-METHYLTRANSFERASE RV1220C-RELATED"/>
    <property type="match status" value="1"/>
</dbReference>
<dbReference type="PANTHER" id="PTHR10509">
    <property type="entry name" value="O-METHYLTRANSFERASE-RELATED"/>
    <property type="match status" value="1"/>
</dbReference>
<dbReference type="Pfam" id="PF01596">
    <property type="entry name" value="Methyltransf_3"/>
    <property type="match status" value="1"/>
</dbReference>
<dbReference type="SUPFAM" id="SSF53335">
    <property type="entry name" value="S-adenosyl-L-methionine-dependent methyltransferases"/>
    <property type="match status" value="1"/>
</dbReference>
<dbReference type="PROSITE" id="PS51682">
    <property type="entry name" value="SAM_OMT_I"/>
    <property type="match status" value="1"/>
</dbReference>
<sequence length="224" mass="23033">MDGTPGHDDMPGQPAPSRGESLWAHAEGSISEDVILAGARERATDIGAGAVTPAVGALLCLLAKLSGGKAVAEVGTGAGVSGLWLLSGMRDDGVLTTIDIEPEHLRLARQAFAEAGIGPSRTRLISGRAQEVLTRLADASYDLVFIDADPIDQPDYVAEGVRLLRSGGVIVVHRAALGGRAGDPGARDAEVIAVREAARLIAEDERLTPALVPLGDGVLAAVRD</sequence>
<comment type="similarity">
    <text evidence="2">Belongs to the class I-like SAM-binding methyltransferase superfamily. Cation-dependent O-methyltransferase family.</text>
</comment>
<comment type="sequence caution" evidence="4">
    <conflict type="erroneous initiation">
        <sequence resource="EMBL-CDS" id="AAK45515"/>
    </conflict>
    <text>Truncated N-terminus.</text>
</comment>
<proteinExistence type="inferred from homology"/>
<keyword id="KW-0489">Methyltransferase</keyword>
<keyword id="KW-1185">Reference proteome</keyword>
<keyword id="KW-0949">S-adenosyl-L-methionine</keyword>
<keyword id="KW-0808">Transferase</keyword>
<reference key="1">
    <citation type="journal article" date="2002" name="J. Bacteriol.">
        <title>Whole-genome comparison of Mycobacterium tuberculosis clinical and laboratory strains.</title>
        <authorList>
            <person name="Fleischmann R.D."/>
            <person name="Alland D."/>
            <person name="Eisen J.A."/>
            <person name="Carpenter L."/>
            <person name="White O."/>
            <person name="Peterson J.D."/>
            <person name="DeBoy R.T."/>
            <person name="Dodson R.J."/>
            <person name="Gwinn M.L."/>
            <person name="Haft D.H."/>
            <person name="Hickey E.K."/>
            <person name="Kolonay J.F."/>
            <person name="Nelson W.C."/>
            <person name="Umayam L.A."/>
            <person name="Ermolaeva M.D."/>
            <person name="Salzberg S.L."/>
            <person name="Delcher A."/>
            <person name="Utterback T.R."/>
            <person name="Weidman J.F."/>
            <person name="Khouri H.M."/>
            <person name="Gill J."/>
            <person name="Mikula A."/>
            <person name="Bishai W."/>
            <person name="Jacobs W.R. Jr."/>
            <person name="Venter J.C."/>
            <person name="Fraser C.M."/>
        </authorList>
    </citation>
    <scope>NUCLEOTIDE SEQUENCE [LARGE SCALE GENOMIC DNA]</scope>
    <source>
        <strain>CDC 1551 / Oshkosh</strain>
    </source>
</reference>
<evidence type="ECO:0000250" key="1"/>
<evidence type="ECO:0000255" key="2">
    <source>
        <dbReference type="PROSITE-ProRule" id="PRU01019"/>
    </source>
</evidence>
<evidence type="ECO:0000256" key="3">
    <source>
        <dbReference type="SAM" id="MobiDB-lite"/>
    </source>
</evidence>
<evidence type="ECO:0000305" key="4"/>
<feature type="chain" id="PRO_0000427743" description="Putative O-methyltransferase MT1258">
    <location>
        <begin position="1"/>
        <end position="224"/>
    </location>
</feature>
<feature type="region of interest" description="Disordered" evidence="3">
    <location>
        <begin position="1"/>
        <end position="21"/>
    </location>
</feature>
<feature type="compositionally biased region" description="Basic and acidic residues" evidence="3">
    <location>
        <begin position="1"/>
        <end position="10"/>
    </location>
</feature>
<feature type="binding site" evidence="2">
    <location>
        <position position="51"/>
    </location>
    <ligand>
        <name>S-adenosyl-L-methionine</name>
        <dbReference type="ChEBI" id="CHEBI:59789"/>
    </ligand>
</feature>
<feature type="binding site" evidence="2">
    <location>
        <position position="73"/>
    </location>
    <ligand>
        <name>S-adenosyl-L-methionine</name>
        <dbReference type="ChEBI" id="CHEBI:59789"/>
    </ligand>
</feature>
<feature type="binding site" evidence="2">
    <location>
        <begin position="75"/>
        <end position="76"/>
    </location>
    <ligand>
        <name>S-adenosyl-L-methionine</name>
        <dbReference type="ChEBI" id="CHEBI:59789"/>
    </ligand>
</feature>
<feature type="binding site" evidence="2">
    <location>
        <position position="81"/>
    </location>
    <ligand>
        <name>S-adenosyl-L-methionine</name>
        <dbReference type="ChEBI" id="CHEBI:59789"/>
    </ligand>
</feature>
<feature type="binding site" evidence="2">
    <location>
        <position position="99"/>
    </location>
    <ligand>
        <name>S-adenosyl-L-methionine</name>
        <dbReference type="ChEBI" id="CHEBI:59789"/>
    </ligand>
</feature>
<feature type="binding site" evidence="2">
    <location>
        <position position="100"/>
    </location>
    <ligand>
        <name>S-adenosyl-L-methionine</name>
        <dbReference type="ChEBI" id="CHEBI:59789"/>
    </ligand>
</feature>
<feature type="binding site" evidence="1">
    <location>
        <position position="147"/>
    </location>
    <ligand>
        <name>substrate</name>
    </ligand>
</feature>
<feature type="binding site" evidence="2">
    <location>
        <position position="149"/>
    </location>
    <ligand>
        <name>S-adenosyl-L-methionine</name>
        <dbReference type="ChEBI" id="CHEBI:59789"/>
    </ligand>
</feature>
<accession>P9WJZ6</accession>
<accession>L0T607</accession>
<accession>O33219</accession>
<accession>Q7D8K9</accession>
<organism>
    <name type="scientific">Mycobacterium tuberculosis (strain CDC 1551 / Oshkosh)</name>
    <dbReference type="NCBI Taxonomy" id="83331"/>
    <lineage>
        <taxon>Bacteria</taxon>
        <taxon>Bacillati</taxon>
        <taxon>Actinomycetota</taxon>
        <taxon>Actinomycetes</taxon>
        <taxon>Mycobacteriales</taxon>
        <taxon>Mycobacteriaceae</taxon>
        <taxon>Mycobacterium</taxon>
        <taxon>Mycobacterium tuberculosis complex</taxon>
    </lineage>
</organism>
<gene>
    <name type="ordered locus">MT1258</name>
</gene>
<protein>
    <recommendedName>
        <fullName>Putative O-methyltransferase MT1258</fullName>
        <ecNumber>2.1.1.-</ecNumber>
    </recommendedName>
</protein>